<evidence type="ECO:0000255" key="1">
    <source>
        <dbReference type="HAMAP-Rule" id="MF_01309"/>
    </source>
</evidence>
<evidence type="ECO:0000305" key="2"/>
<protein>
    <recommendedName>
        <fullName evidence="1">Small ribosomal subunit protein uS3</fullName>
    </recommendedName>
    <alternativeName>
        <fullName evidence="2">30S ribosomal protein S3</fullName>
    </alternativeName>
</protein>
<gene>
    <name evidence="1" type="primary">rpsC</name>
    <name type="ordered locus">MXAN_3305</name>
</gene>
<name>RS3_MYXXD</name>
<organism>
    <name type="scientific">Myxococcus xanthus (strain DK1622)</name>
    <dbReference type="NCBI Taxonomy" id="246197"/>
    <lineage>
        <taxon>Bacteria</taxon>
        <taxon>Pseudomonadati</taxon>
        <taxon>Myxococcota</taxon>
        <taxon>Myxococcia</taxon>
        <taxon>Myxococcales</taxon>
        <taxon>Cystobacterineae</taxon>
        <taxon>Myxococcaceae</taxon>
        <taxon>Myxococcus</taxon>
    </lineage>
</organism>
<comment type="function">
    <text evidence="1">Binds the lower part of the 30S subunit head. Binds mRNA in the 70S ribosome, positioning it for translation.</text>
</comment>
<comment type="subunit">
    <text evidence="1">Part of the 30S ribosomal subunit. Forms a tight complex with proteins S10 and S14.</text>
</comment>
<comment type="similarity">
    <text evidence="1">Belongs to the universal ribosomal protein uS3 family.</text>
</comment>
<accession>Q1D769</accession>
<feature type="chain" id="PRO_0000293837" description="Small ribosomal subunit protein uS3">
    <location>
        <begin position="1"/>
        <end position="220"/>
    </location>
</feature>
<feature type="domain" description="KH type-2" evidence="1">
    <location>
        <begin position="38"/>
        <end position="106"/>
    </location>
</feature>
<sequence length="220" mass="24801">MGQKVHPIGFRLGVIKTWDSKWFEHKNYAQWLHEDIRIREFVKKSLNHAGVSKVEIERAANKVKVNVHTARPGIVIGKRGAGIETVKKDLQQFTKNEVFLNIVEVRKAETDAQLVAENIATQLERRIAFRRAMKKALQTAMKFGAKGIRVACSGRLGGAEMARYEWYREGRVPLHTLRADIDYGFAEAKTTYGKIGCKVWVCKGEVLPGKGGQAPMPSNR</sequence>
<dbReference type="EMBL" id="CP000113">
    <property type="protein sequence ID" value="ABF91094.1"/>
    <property type="molecule type" value="Genomic_DNA"/>
</dbReference>
<dbReference type="RefSeq" id="WP_002633602.1">
    <property type="nucleotide sequence ID" value="NC_008095.1"/>
</dbReference>
<dbReference type="SMR" id="Q1D769"/>
<dbReference type="STRING" id="246197.MXAN_3305"/>
<dbReference type="EnsemblBacteria" id="ABF91094">
    <property type="protein sequence ID" value="ABF91094"/>
    <property type="gene ID" value="MXAN_3305"/>
</dbReference>
<dbReference type="GeneID" id="41360658"/>
<dbReference type="KEGG" id="mxa:MXAN_3305"/>
<dbReference type="eggNOG" id="COG0092">
    <property type="taxonomic scope" value="Bacteria"/>
</dbReference>
<dbReference type="HOGENOM" id="CLU_058591_0_2_7"/>
<dbReference type="OrthoDB" id="9806396at2"/>
<dbReference type="Proteomes" id="UP000002402">
    <property type="component" value="Chromosome"/>
</dbReference>
<dbReference type="GO" id="GO:0022627">
    <property type="term" value="C:cytosolic small ribosomal subunit"/>
    <property type="evidence" value="ECO:0007669"/>
    <property type="project" value="TreeGrafter"/>
</dbReference>
<dbReference type="GO" id="GO:0003729">
    <property type="term" value="F:mRNA binding"/>
    <property type="evidence" value="ECO:0007669"/>
    <property type="project" value="UniProtKB-UniRule"/>
</dbReference>
<dbReference type="GO" id="GO:0019843">
    <property type="term" value="F:rRNA binding"/>
    <property type="evidence" value="ECO:0007669"/>
    <property type="project" value="UniProtKB-UniRule"/>
</dbReference>
<dbReference type="GO" id="GO:0003735">
    <property type="term" value="F:structural constituent of ribosome"/>
    <property type="evidence" value="ECO:0007669"/>
    <property type="project" value="InterPro"/>
</dbReference>
<dbReference type="GO" id="GO:0006412">
    <property type="term" value="P:translation"/>
    <property type="evidence" value="ECO:0007669"/>
    <property type="project" value="UniProtKB-UniRule"/>
</dbReference>
<dbReference type="CDD" id="cd02412">
    <property type="entry name" value="KH-II_30S_S3"/>
    <property type="match status" value="1"/>
</dbReference>
<dbReference type="FunFam" id="3.30.1140.32:FF:000002">
    <property type="entry name" value="30S ribosomal protein S3"/>
    <property type="match status" value="1"/>
</dbReference>
<dbReference type="FunFam" id="3.30.300.20:FF:000001">
    <property type="entry name" value="30S ribosomal protein S3"/>
    <property type="match status" value="1"/>
</dbReference>
<dbReference type="Gene3D" id="3.30.300.20">
    <property type="match status" value="1"/>
</dbReference>
<dbReference type="Gene3D" id="3.30.1140.32">
    <property type="entry name" value="Ribosomal protein S3, C-terminal domain"/>
    <property type="match status" value="1"/>
</dbReference>
<dbReference type="HAMAP" id="MF_01309_B">
    <property type="entry name" value="Ribosomal_uS3_B"/>
    <property type="match status" value="1"/>
</dbReference>
<dbReference type="InterPro" id="IPR004087">
    <property type="entry name" value="KH_dom"/>
</dbReference>
<dbReference type="InterPro" id="IPR015946">
    <property type="entry name" value="KH_dom-like_a/b"/>
</dbReference>
<dbReference type="InterPro" id="IPR004044">
    <property type="entry name" value="KH_dom_type_2"/>
</dbReference>
<dbReference type="InterPro" id="IPR009019">
    <property type="entry name" value="KH_sf_prok-type"/>
</dbReference>
<dbReference type="InterPro" id="IPR036419">
    <property type="entry name" value="Ribosomal_S3_C_sf"/>
</dbReference>
<dbReference type="InterPro" id="IPR005704">
    <property type="entry name" value="Ribosomal_uS3_bac-typ"/>
</dbReference>
<dbReference type="InterPro" id="IPR001351">
    <property type="entry name" value="Ribosomal_uS3_C"/>
</dbReference>
<dbReference type="InterPro" id="IPR018280">
    <property type="entry name" value="Ribosomal_uS3_CS"/>
</dbReference>
<dbReference type="NCBIfam" id="TIGR01009">
    <property type="entry name" value="rpsC_bact"/>
    <property type="match status" value="1"/>
</dbReference>
<dbReference type="PANTHER" id="PTHR11760">
    <property type="entry name" value="30S/40S RIBOSOMAL PROTEIN S3"/>
    <property type="match status" value="1"/>
</dbReference>
<dbReference type="PANTHER" id="PTHR11760:SF19">
    <property type="entry name" value="SMALL RIBOSOMAL SUBUNIT PROTEIN US3C"/>
    <property type="match status" value="1"/>
</dbReference>
<dbReference type="Pfam" id="PF07650">
    <property type="entry name" value="KH_2"/>
    <property type="match status" value="1"/>
</dbReference>
<dbReference type="Pfam" id="PF00189">
    <property type="entry name" value="Ribosomal_S3_C"/>
    <property type="match status" value="1"/>
</dbReference>
<dbReference type="SMART" id="SM00322">
    <property type="entry name" value="KH"/>
    <property type="match status" value="1"/>
</dbReference>
<dbReference type="SUPFAM" id="SSF54814">
    <property type="entry name" value="Prokaryotic type KH domain (KH-domain type II)"/>
    <property type="match status" value="1"/>
</dbReference>
<dbReference type="SUPFAM" id="SSF54821">
    <property type="entry name" value="Ribosomal protein S3 C-terminal domain"/>
    <property type="match status" value="1"/>
</dbReference>
<dbReference type="PROSITE" id="PS50823">
    <property type="entry name" value="KH_TYPE_2"/>
    <property type="match status" value="1"/>
</dbReference>
<dbReference type="PROSITE" id="PS00548">
    <property type="entry name" value="RIBOSOMAL_S3"/>
    <property type="match status" value="1"/>
</dbReference>
<keyword id="KW-1185">Reference proteome</keyword>
<keyword id="KW-0687">Ribonucleoprotein</keyword>
<keyword id="KW-0689">Ribosomal protein</keyword>
<keyword id="KW-0694">RNA-binding</keyword>
<keyword id="KW-0699">rRNA-binding</keyword>
<reference key="1">
    <citation type="journal article" date="2006" name="Proc. Natl. Acad. Sci. U.S.A.">
        <title>Evolution of sensory complexity recorded in a myxobacterial genome.</title>
        <authorList>
            <person name="Goldman B.S."/>
            <person name="Nierman W.C."/>
            <person name="Kaiser D."/>
            <person name="Slater S.C."/>
            <person name="Durkin A.S."/>
            <person name="Eisen J.A."/>
            <person name="Ronning C.M."/>
            <person name="Barbazuk W.B."/>
            <person name="Blanchard M."/>
            <person name="Field C."/>
            <person name="Halling C."/>
            <person name="Hinkle G."/>
            <person name="Iartchuk O."/>
            <person name="Kim H.S."/>
            <person name="Mackenzie C."/>
            <person name="Madupu R."/>
            <person name="Miller N."/>
            <person name="Shvartsbeyn A."/>
            <person name="Sullivan S.A."/>
            <person name="Vaudin M."/>
            <person name="Wiegand R."/>
            <person name="Kaplan H.B."/>
        </authorList>
    </citation>
    <scope>NUCLEOTIDE SEQUENCE [LARGE SCALE GENOMIC DNA]</scope>
    <source>
        <strain>DK1622</strain>
    </source>
</reference>
<proteinExistence type="inferred from homology"/>